<keyword id="KW-0027">Amidation</keyword>
<keyword id="KW-0903">Direct protein sequencing</keyword>
<keyword id="KW-0527">Neuropeptide</keyword>
<keyword id="KW-0964">Secreted</keyword>
<dbReference type="PIR" id="A56634">
    <property type="entry name" value="A56634"/>
</dbReference>
<dbReference type="SMR" id="P41334"/>
<dbReference type="GO" id="GO:0005576">
    <property type="term" value="C:extracellular region"/>
    <property type="evidence" value="ECO:0007669"/>
    <property type="project" value="UniProtKB-SubCell"/>
</dbReference>
<dbReference type="GO" id="GO:0005179">
    <property type="term" value="F:hormone activity"/>
    <property type="evidence" value="ECO:0007669"/>
    <property type="project" value="InterPro"/>
</dbReference>
<dbReference type="GO" id="GO:0007218">
    <property type="term" value="P:neuropeptide signaling pathway"/>
    <property type="evidence" value="ECO:0007669"/>
    <property type="project" value="UniProtKB-KW"/>
</dbReference>
<dbReference type="CDD" id="cd00126">
    <property type="entry name" value="PAH"/>
    <property type="match status" value="1"/>
</dbReference>
<dbReference type="InterPro" id="IPR001955">
    <property type="entry name" value="Pancreatic_hormone-like"/>
</dbReference>
<dbReference type="InterPro" id="IPR020392">
    <property type="entry name" value="Pancreatic_hormone-like_CS"/>
</dbReference>
<dbReference type="SMART" id="SM00309">
    <property type="entry name" value="PAH"/>
    <property type="match status" value="1"/>
</dbReference>
<dbReference type="PROSITE" id="PS00265">
    <property type="entry name" value="PANCREATIC_HORMONE_1"/>
    <property type="match status" value="1"/>
</dbReference>
<dbReference type="PROSITE" id="PS50276">
    <property type="entry name" value="PANCREATIC_HORMONE_2"/>
    <property type="match status" value="1"/>
</dbReference>
<comment type="function">
    <text>May perform an important neurotransmitter function and may regulate muscular activity.</text>
</comment>
<comment type="subcellular location">
    <subcellularLocation>
        <location>Secreted</location>
    </subcellularLocation>
</comment>
<comment type="tissue specificity">
    <text>Central and peripheral nervous system, and muscular pharynx.</text>
</comment>
<comment type="similarity">
    <text evidence="2">Belongs to the NPY family.</text>
</comment>
<feature type="peptide" id="PRO_0000044823" description="Neuropeptide F">
    <location>
        <begin position="1"/>
        <end position="36"/>
    </location>
</feature>
<feature type="modified residue" description="Phenylalanine amide" evidence="1">
    <location>
        <position position="36"/>
    </location>
</feature>
<accession>P41334</accession>
<sequence>KVVHLRPRSSFSSEDEYQIYLRNVSKYIQLYGRPRF</sequence>
<evidence type="ECO:0000269" key="1">
    <source>
    </source>
</evidence>
<evidence type="ECO:0000305" key="2"/>
<proteinExistence type="evidence at protein level"/>
<protein>
    <recommendedName>
        <fullName>Neuropeptide F</fullName>
        <shortName>NPF</shortName>
    </recommendedName>
</protein>
<reference key="1">
    <citation type="journal article" date="1992" name="Comp. Biochem. Physiol.">
        <title>Neuropeptide F: primary structure from the tubellarian, Artioposthia triangulata.</title>
        <authorList>
            <person name="Curry W.J."/>
            <person name="Shaw C."/>
            <person name="Johnston C.F."/>
            <person name="Thim L."/>
            <person name="Buchanan K.D."/>
        </authorList>
    </citation>
    <scope>PROTEIN SEQUENCE</scope>
    <scope>AMIDATION AT PHE-36</scope>
</reference>
<name>NPF_ARTTR</name>
<organism>
    <name type="scientific">Arthurdendyus triangulatus</name>
    <name type="common">New Zealand flatworm</name>
    <name type="synonym">Artioposthia triangulata</name>
    <dbReference type="NCBI Taxonomy" id="132421"/>
    <lineage>
        <taxon>Eukaryota</taxon>
        <taxon>Metazoa</taxon>
        <taxon>Spiralia</taxon>
        <taxon>Lophotrochozoa</taxon>
        <taxon>Platyhelminthes</taxon>
        <taxon>Rhabditophora</taxon>
        <taxon>Seriata</taxon>
        <taxon>Tricladida</taxon>
        <taxon>Continenticola</taxon>
        <taxon>Geoplanoidea</taxon>
        <taxon>Geoplanidae</taxon>
        <taxon>Caenoplaninae</taxon>
        <taxon>Arthurdendyus</taxon>
    </lineage>
</organism>